<feature type="chain" id="PRO_1000132161" description="Probable transcriptional regulatory protein BRE_29">
    <location>
        <begin position="1"/>
        <end position="243"/>
    </location>
</feature>
<reference key="1">
    <citation type="journal article" date="2008" name="PLoS Genet.">
        <title>The genome of Borrelia recurrentis, the agent of deadly louse-borne relapsing fever, is a degraded subset of tick-borne Borrelia duttonii.</title>
        <authorList>
            <person name="Lescot M."/>
            <person name="Audic S."/>
            <person name="Robert C."/>
            <person name="Nguyen T.T."/>
            <person name="Blanc G."/>
            <person name="Cutler S.J."/>
            <person name="Wincker P."/>
            <person name="Couloux A."/>
            <person name="Claverie J.-M."/>
            <person name="Raoult D."/>
            <person name="Drancourt M."/>
        </authorList>
    </citation>
    <scope>NUCLEOTIDE SEQUENCE [LARGE SCALE GENOMIC DNA]</scope>
    <source>
        <strain>A1</strain>
    </source>
</reference>
<evidence type="ECO:0000255" key="1">
    <source>
        <dbReference type="HAMAP-Rule" id="MF_00693"/>
    </source>
</evidence>
<organism>
    <name type="scientific">Borrelia recurrentis (strain A1)</name>
    <dbReference type="NCBI Taxonomy" id="412418"/>
    <lineage>
        <taxon>Bacteria</taxon>
        <taxon>Pseudomonadati</taxon>
        <taxon>Spirochaetota</taxon>
        <taxon>Spirochaetia</taxon>
        <taxon>Spirochaetales</taxon>
        <taxon>Borreliaceae</taxon>
        <taxon>Borrelia</taxon>
    </lineage>
</organism>
<accession>B5RQK7</accession>
<gene>
    <name type="ordered locus">BRE_29</name>
</gene>
<dbReference type="EMBL" id="CP000993">
    <property type="protein sequence ID" value="ACH94291.1"/>
    <property type="molecule type" value="Genomic_DNA"/>
</dbReference>
<dbReference type="RefSeq" id="WP_012538605.1">
    <property type="nucleotide sequence ID" value="NC_011244.1"/>
</dbReference>
<dbReference type="SMR" id="B5RQK7"/>
<dbReference type="KEGG" id="bre:BRE_29"/>
<dbReference type="HOGENOM" id="CLU_062974_2_2_12"/>
<dbReference type="Proteomes" id="UP000000612">
    <property type="component" value="Chromosome"/>
</dbReference>
<dbReference type="GO" id="GO:0005829">
    <property type="term" value="C:cytosol"/>
    <property type="evidence" value="ECO:0007669"/>
    <property type="project" value="TreeGrafter"/>
</dbReference>
<dbReference type="GO" id="GO:0003677">
    <property type="term" value="F:DNA binding"/>
    <property type="evidence" value="ECO:0007669"/>
    <property type="project" value="UniProtKB-UniRule"/>
</dbReference>
<dbReference type="GO" id="GO:0006355">
    <property type="term" value="P:regulation of DNA-templated transcription"/>
    <property type="evidence" value="ECO:0007669"/>
    <property type="project" value="UniProtKB-UniRule"/>
</dbReference>
<dbReference type="FunFam" id="1.10.10.200:FF:000002">
    <property type="entry name" value="Probable transcriptional regulatory protein CLM62_37755"/>
    <property type="match status" value="1"/>
</dbReference>
<dbReference type="Gene3D" id="1.10.10.200">
    <property type="match status" value="1"/>
</dbReference>
<dbReference type="Gene3D" id="3.30.70.980">
    <property type="match status" value="2"/>
</dbReference>
<dbReference type="HAMAP" id="MF_00693">
    <property type="entry name" value="Transcrip_reg_TACO1"/>
    <property type="match status" value="1"/>
</dbReference>
<dbReference type="InterPro" id="IPR017856">
    <property type="entry name" value="Integrase-like_N"/>
</dbReference>
<dbReference type="InterPro" id="IPR048300">
    <property type="entry name" value="TACO1_YebC-like_2nd/3rd_dom"/>
</dbReference>
<dbReference type="InterPro" id="IPR049083">
    <property type="entry name" value="TACO1_YebC_N"/>
</dbReference>
<dbReference type="InterPro" id="IPR002876">
    <property type="entry name" value="Transcrip_reg_TACO1-like"/>
</dbReference>
<dbReference type="InterPro" id="IPR026564">
    <property type="entry name" value="Transcrip_reg_TACO1-like_dom3"/>
</dbReference>
<dbReference type="InterPro" id="IPR029072">
    <property type="entry name" value="YebC-like"/>
</dbReference>
<dbReference type="NCBIfam" id="NF001030">
    <property type="entry name" value="PRK00110.1"/>
    <property type="match status" value="1"/>
</dbReference>
<dbReference type="NCBIfam" id="NF009044">
    <property type="entry name" value="PRK12378.1"/>
    <property type="match status" value="1"/>
</dbReference>
<dbReference type="NCBIfam" id="TIGR01033">
    <property type="entry name" value="YebC/PmpR family DNA-binding transcriptional regulator"/>
    <property type="match status" value="1"/>
</dbReference>
<dbReference type="PANTHER" id="PTHR12532:SF6">
    <property type="entry name" value="TRANSCRIPTIONAL REGULATORY PROTEIN YEBC-RELATED"/>
    <property type="match status" value="1"/>
</dbReference>
<dbReference type="PANTHER" id="PTHR12532">
    <property type="entry name" value="TRANSLATIONAL ACTIVATOR OF CYTOCHROME C OXIDASE 1"/>
    <property type="match status" value="1"/>
</dbReference>
<dbReference type="Pfam" id="PF20772">
    <property type="entry name" value="TACO1_YebC_N"/>
    <property type="match status" value="1"/>
</dbReference>
<dbReference type="Pfam" id="PF01709">
    <property type="entry name" value="Transcrip_reg"/>
    <property type="match status" value="1"/>
</dbReference>
<dbReference type="SUPFAM" id="SSF75625">
    <property type="entry name" value="YebC-like"/>
    <property type="match status" value="1"/>
</dbReference>
<proteinExistence type="inferred from homology"/>
<sequence length="243" mass="26943">MSGHSKWSTIKRKKGTLDAKRNKIFTKLIREISIAARMGGGDIDSNPRLRLAVNKARVANMPKDNIEKAIKKGIGDNMGSEYFKLTYEAYALYGVALIIKCLTDNKNRTASEVRSVLSKSGGSLGAPGSVSYMFHKKGLISYNLDKYHEDEIIELALEAGAEDIYSEGSQVEVITSADNFESVSSILRTKFEEDIAEVALVPESKVALDKEQMDKVLAIIEKLEDCDDVQEVYHNLEIVDDIC</sequence>
<name>Y029_BORRA</name>
<comment type="subcellular location">
    <subcellularLocation>
        <location evidence="1">Cytoplasm</location>
    </subcellularLocation>
</comment>
<comment type="similarity">
    <text evidence="1">Belongs to the TACO1 family.</text>
</comment>
<protein>
    <recommendedName>
        <fullName evidence="1">Probable transcriptional regulatory protein BRE_29</fullName>
    </recommendedName>
</protein>
<keyword id="KW-0963">Cytoplasm</keyword>
<keyword id="KW-0238">DNA-binding</keyword>
<keyword id="KW-0804">Transcription</keyword>
<keyword id="KW-0805">Transcription regulation</keyword>